<proteinExistence type="evidence at protein level"/>
<feature type="transit peptide" description="Mitochondrion" evidence="4">
    <location>
        <begin position="1"/>
        <end position="117"/>
    </location>
</feature>
<feature type="chain" id="PRO_0000262964" description="Serine beta-lactamase-like protein LACTB, mitochondrial">
    <location>
        <begin position="118"/>
        <end position="556"/>
    </location>
</feature>
<feature type="region of interest" description="Disordered" evidence="5">
    <location>
        <begin position="249"/>
        <end position="290"/>
    </location>
</feature>
<feature type="compositionally biased region" description="Basic and acidic residues" evidence="5">
    <location>
        <begin position="249"/>
        <end position="282"/>
    </location>
</feature>
<feature type="active site" description="Acyl-ester intermediate" evidence="1">
    <location>
        <position position="166"/>
    </location>
</feature>
<feature type="modified residue" description="N6-succinyllysine" evidence="3">
    <location>
        <position position="290"/>
    </location>
</feature>
<feature type="modified residue" description="N6-succinyllysine" evidence="3">
    <location>
        <position position="291"/>
    </location>
</feature>
<feature type="modified residue" description="N6-acetyllysine" evidence="3">
    <location>
        <position position="304"/>
    </location>
</feature>
<feature type="modified residue" description="N6-acetyllysine" evidence="2">
    <location>
        <position position="349"/>
    </location>
</feature>
<name>LACTB_BOVIN</name>
<keyword id="KW-0007">Acetylation</keyword>
<keyword id="KW-0903">Direct protein sequencing</keyword>
<keyword id="KW-0378">Hydrolase</keyword>
<keyword id="KW-0443">Lipid metabolism</keyword>
<keyword id="KW-0496">Mitochondrion</keyword>
<keyword id="KW-0645">Protease</keyword>
<keyword id="KW-1185">Reference proteome</keyword>
<keyword id="KW-0809">Transit peptide</keyword>
<organism>
    <name type="scientific">Bos taurus</name>
    <name type="common">Bovine</name>
    <dbReference type="NCBI Taxonomy" id="9913"/>
    <lineage>
        <taxon>Eukaryota</taxon>
        <taxon>Metazoa</taxon>
        <taxon>Chordata</taxon>
        <taxon>Craniata</taxon>
        <taxon>Vertebrata</taxon>
        <taxon>Euteleostomi</taxon>
        <taxon>Mammalia</taxon>
        <taxon>Eutheria</taxon>
        <taxon>Laurasiatheria</taxon>
        <taxon>Artiodactyla</taxon>
        <taxon>Ruminantia</taxon>
        <taxon>Pecora</taxon>
        <taxon>Bovidae</taxon>
        <taxon>Bovinae</taxon>
        <taxon>Bos</taxon>
    </lineage>
</organism>
<sequence>MYRLLSAVMARAATTGGCAWGCGRRAAHQRAGLPPLGPGWVGGLGLGLGLALGVKLAGGLRGASPAPPAAAPDPEALPQAEPLQAQEQPLAPWSPQTPAPPHTRHFARAIDSSRDLLHRIKDEVGAPGIVVGVSVDGKEVWSEGLGYADVENRVPCKPETVMRIASISKSLTMVAIAKLWEAGKLDLDIPVQHYVPEFPEKEYEGEKVSVTTRLLISHLSGIRHYEKDMKKVKEEKAYKALKMMKEMMESDQEKELKEKGGKSNEKNDFAKAKVEQDNETKGRNSKPCKKKNDFEQGELYLKEKFENSIESLRLFKNDPLFFKPGSQFLYSTFGYTLLAAIVERASGYKYLDYMQKIFHDLDMLTTVQEENEPVIYNRARFYVYNKKKRLVNTPYVDNSYKWAGGGFLSTVGDLLKFGNAMLYGYQVGLFKNANENLLPGYLKPETMLMIWTPVPNTEMSWDKEGKYAMAWGVVEKKQTYGSCRKQRHYASHTGGAVGASSVLLVLPEELDAEALNNKVPPRGIVVSIICNMQSVGLNSTALKIALEFDKDRSDIP</sequence>
<reference key="1">
    <citation type="journal article" date="2009" name="Science">
        <title>The genome sequence of taurine cattle: a window to ruminant biology and evolution.</title>
        <authorList>
            <consortium name="The bovine genome sequencing and analysis consortium"/>
        </authorList>
    </citation>
    <scope>NUCLEOTIDE SEQUENCE [LARGE SCALE GENOMIC DNA]</scope>
    <source>
        <strain>Hereford</strain>
    </source>
</reference>
<reference evidence="7" key="2">
    <citation type="journal article" date="2001" name="J. Biol. Chem.">
        <title>The large subunit of the mammalian mitochondrial ribosome. Analysis of the complement of ribosomal proteins present.</title>
        <authorList>
            <person name="Koc E.C."/>
            <person name="Burkhart W."/>
            <person name="Blackburn K."/>
            <person name="Moyer M.B."/>
            <person name="Schlatzer D.M."/>
            <person name="Moseley A."/>
            <person name="Spremulli L.L."/>
        </authorList>
    </citation>
    <scope>PROTEIN SEQUENCE OF 402-416; 432-463 AND 467-476</scope>
    <scope>SUBCELLULAR LOCATION</scope>
    <source>
        <tissue evidence="6">Liver</tissue>
    </source>
</reference>
<accession>P83095</accession>
<gene>
    <name evidence="2" type="primary">LACTB</name>
</gene>
<comment type="function">
    <text evidence="2">Mitochondrial serine protease that acts as a regulator of mitochondrial lipid metabolism. Acts by decreasing protein levels of PISD, a mitochondrial enzyme that converts phosphatidylserine (PtdSer) to phosphatidylethanolamine (PtdEtn), thereby affecting mitochondrial lipid metabolism. It is unclear whether it acts directly by mediating proteolysis of PISD or by mediating proteolysis of another lipid metabolism protein.</text>
</comment>
<comment type="subcellular location">
    <subcellularLocation>
        <location evidence="6">Mitochondrion</location>
    </subcellularLocation>
</comment>
<comment type="similarity">
    <text evidence="7">Belongs to the peptidase S12 family.</text>
</comment>
<comment type="caution">
    <text evidence="8">Was originally identified as 39S ribosomal protein L56 (MRP-L56).</text>
</comment>
<protein>
    <recommendedName>
        <fullName evidence="7">Serine beta-lactamase-like protein LACTB, mitochondrial</fullName>
        <ecNumber evidence="2">3.4.-.-</ecNumber>
    </recommendedName>
</protein>
<dbReference type="EC" id="3.4.-.-" evidence="2"/>
<dbReference type="SMR" id="P83095"/>
<dbReference type="FunCoup" id="P83095">
    <property type="interactions" value="448"/>
</dbReference>
<dbReference type="PaxDb" id="9913-ENSBTAP00000023098"/>
<dbReference type="eggNOG" id="ENOG502QQBX">
    <property type="taxonomic scope" value="Eukaryota"/>
</dbReference>
<dbReference type="HOGENOM" id="CLU_020027_6_0_1"/>
<dbReference type="InParanoid" id="P83095"/>
<dbReference type="OrthoDB" id="5946976at2759"/>
<dbReference type="TreeFam" id="TF315050"/>
<dbReference type="Proteomes" id="UP000009136">
    <property type="component" value="Unplaced"/>
</dbReference>
<dbReference type="GO" id="GO:0005739">
    <property type="term" value="C:mitochondrion"/>
    <property type="evidence" value="ECO:0000250"/>
    <property type="project" value="UniProtKB"/>
</dbReference>
<dbReference type="GO" id="GO:0008233">
    <property type="term" value="F:peptidase activity"/>
    <property type="evidence" value="ECO:0000250"/>
    <property type="project" value="UniProtKB"/>
</dbReference>
<dbReference type="GO" id="GO:0006629">
    <property type="term" value="P:lipid metabolic process"/>
    <property type="evidence" value="ECO:0007669"/>
    <property type="project" value="UniProtKB-KW"/>
</dbReference>
<dbReference type="GO" id="GO:0006508">
    <property type="term" value="P:proteolysis"/>
    <property type="evidence" value="ECO:0000250"/>
    <property type="project" value="UniProtKB"/>
</dbReference>
<dbReference type="GO" id="GO:0019216">
    <property type="term" value="P:regulation of lipid metabolic process"/>
    <property type="evidence" value="ECO:0000250"/>
    <property type="project" value="UniProtKB"/>
</dbReference>
<dbReference type="FunFam" id="3.40.710.10:FF:000015">
    <property type="entry name" value="Serine beta-lactamase-like protein LACTB, mitochondrial"/>
    <property type="match status" value="1"/>
</dbReference>
<dbReference type="FunFam" id="3.40.710.10:FF:000016">
    <property type="entry name" value="serine beta-lactamase-like protein LACTB, mitochondrial"/>
    <property type="match status" value="1"/>
</dbReference>
<dbReference type="Gene3D" id="3.40.710.10">
    <property type="entry name" value="DD-peptidase/beta-lactamase superfamily"/>
    <property type="match status" value="2"/>
</dbReference>
<dbReference type="InterPro" id="IPR001466">
    <property type="entry name" value="Beta-lactam-related"/>
</dbReference>
<dbReference type="InterPro" id="IPR012338">
    <property type="entry name" value="Beta-lactam/transpept-like"/>
</dbReference>
<dbReference type="InterPro" id="IPR052794">
    <property type="entry name" value="Mito_Ser_Protease_LACTB"/>
</dbReference>
<dbReference type="PANTHER" id="PTHR46520">
    <property type="entry name" value="SERINE BETA-LACTAMASE-LIKE PROTEIN LACTB, MITOCHONDRIAL"/>
    <property type="match status" value="1"/>
</dbReference>
<dbReference type="PANTHER" id="PTHR46520:SF1">
    <property type="entry name" value="SERINE BETA-LACTAMASE-LIKE PROTEIN LACTB, MITOCHONDRIAL"/>
    <property type="match status" value="1"/>
</dbReference>
<dbReference type="Pfam" id="PF00144">
    <property type="entry name" value="Beta-lactamase"/>
    <property type="match status" value="2"/>
</dbReference>
<dbReference type="SUPFAM" id="SSF56601">
    <property type="entry name" value="beta-lactamase/transpeptidase-like"/>
    <property type="match status" value="1"/>
</dbReference>
<evidence type="ECO:0000250" key="1">
    <source>
        <dbReference type="UniProtKB" id="P15555"/>
    </source>
</evidence>
<evidence type="ECO:0000250" key="2">
    <source>
        <dbReference type="UniProtKB" id="P83111"/>
    </source>
</evidence>
<evidence type="ECO:0000250" key="3">
    <source>
        <dbReference type="UniProtKB" id="Q9EP89"/>
    </source>
</evidence>
<evidence type="ECO:0000255" key="4"/>
<evidence type="ECO:0000256" key="5">
    <source>
        <dbReference type="SAM" id="MobiDB-lite"/>
    </source>
</evidence>
<evidence type="ECO:0000269" key="6">
    <source>
    </source>
</evidence>
<evidence type="ECO:0000305" key="7"/>
<evidence type="ECO:0000305" key="8">
    <source>
    </source>
</evidence>